<comment type="similarity">
    <text evidence="1">Belongs to the eukaryotic ribosomal protein eL32 family.</text>
</comment>
<protein>
    <recommendedName>
        <fullName evidence="1">Large ribosomal subunit protein eL32</fullName>
    </recommendedName>
    <alternativeName>
        <fullName evidence="2">50S ribosomal protein L32e</fullName>
    </alternativeName>
</protein>
<evidence type="ECO:0000255" key="1">
    <source>
        <dbReference type="HAMAP-Rule" id="MF_00810"/>
    </source>
</evidence>
<evidence type="ECO:0000305" key="2"/>
<accession>A4FWA4</accession>
<dbReference type="EMBL" id="CP000609">
    <property type="protein sequence ID" value="ABO34479.1"/>
    <property type="molecule type" value="Genomic_DNA"/>
</dbReference>
<dbReference type="RefSeq" id="WP_011867939.1">
    <property type="nucleotide sequence ID" value="NC_009135.1"/>
</dbReference>
<dbReference type="SMR" id="A4FWA4"/>
<dbReference type="STRING" id="402880.MmarC5_0162"/>
<dbReference type="GeneID" id="4928292"/>
<dbReference type="KEGG" id="mmq:MmarC5_0162"/>
<dbReference type="eggNOG" id="arCOG00781">
    <property type="taxonomic scope" value="Archaea"/>
</dbReference>
<dbReference type="HOGENOM" id="CLU_071479_3_1_2"/>
<dbReference type="OrthoDB" id="372100at2157"/>
<dbReference type="Proteomes" id="UP000000253">
    <property type="component" value="Chromosome"/>
</dbReference>
<dbReference type="GO" id="GO:0022625">
    <property type="term" value="C:cytosolic large ribosomal subunit"/>
    <property type="evidence" value="ECO:0007669"/>
    <property type="project" value="TreeGrafter"/>
</dbReference>
<dbReference type="GO" id="GO:0003735">
    <property type="term" value="F:structural constituent of ribosome"/>
    <property type="evidence" value="ECO:0007669"/>
    <property type="project" value="InterPro"/>
</dbReference>
<dbReference type="GO" id="GO:0006412">
    <property type="term" value="P:translation"/>
    <property type="evidence" value="ECO:0007669"/>
    <property type="project" value="UniProtKB-UniRule"/>
</dbReference>
<dbReference type="CDD" id="cd00513">
    <property type="entry name" value="Ribosomal_L32_L32e"/>
    <property type="match status" value="1"/>
</dbReference>
<dbReference type="HAMAP" id="MF_00810">
    <property type="entry name" value="Ribosomal_eL32"/>
    <property type="match status" value="1"/>
</dbReference>
<dbReference type="InterPro" id="IPR001515">
    <property type="entry name" value="Ribosomal_eL32"/>
</dbReference>
<dbReference type="InterPro" id="IPR023654">
    <property type="entry name" value="Ribosomal_eL32_arc"/>
</dbReference>
<dbReference type="InterPro" id="IPR018263">
    <property type="entry name" value="Ribosomal_eL32_CS"/>
</dbReference>
<dbReference type="InterPro" id="IPR036351">
    <property type="entry name" value="Ribosomal_eL32_sf"/>
</dbReference>
<dbReference type="NCBIfam" id="NF006332">
    <property type="entry name" value="PRK08562.1"/>
    <property type="match status" value="1"/>
</dbReference>
<dbReference type="PANTHER" id="PTHR23413">
    <property type="entry name" value="60S RIBOSOMAL PROTEIN L32 AND DNA-DIRECTED RNA POLYMERASE II, SUBUNIT N"/>
    <property type="match status" value="1"/>
</dbReference>
<dbReference type="PANTHER" id="PTHR23413:SF1">
    <property type="entry name" value="RIBOSOMAL PROTEIN L32"/>
    <property type="match status" value="1"/>
</dbReference>
<dbReference type="Pfam" id="PF01655">
    <property type="entry name" value="Ribosomal_L32e"/>
    <property type="match status" value="1"/>
</dbReference>
<dbReference type="SMART" id="SM01393">
    <property type="entry name" value="Ribosomal_L32e"/>
    <property type="match status" value="1"/>
</dbReference>
<dbReference type="SUPFAM" id="SSF52042">
    <property type="entry name" value="Ribosomal protein L32e"/>
    <property type="match status" value="1"/>
</dbReference>
<dbReference type="PROSITE" id="PS00580">
    <property type="entry name" value="RIBOSOMAL_L32E"/>
    <property type="match status" value="1"/>
</dbReference>
<feature type="chain" id="PRO_1000047107" description="Large ribosomal subunit protein eL32">
    <location>
        <begin position="1"/>
        <end position="135"/>
    </location>
</feature>
<gene>
    <name evidence="1" type="primary">rpl32e</name>
    <name type="ordered locus">MmarC5_0162</name>
</gene>
<name>RL32_METM5</name>
<organism>
    <name type="scientific">Methanococcus maripaludis (strain C5 / ATCC BAA-1333)</name>
    <dbReference type="NCBI Taxonomy" id="402880"/>
    <lineage>
        <taxon>Archaea</taxon>
        <taxon>Methanobacteriati</taxon>
        <taxon>Methanobacteriota</taxon>
        <taxon>Methanomada group</taxon>
        <taxon>Methanococci</taxon>
        <taxon>Methanococcales</taxon>
        <taxon>Methanococcaceae</taxon>
        <taxon>Methanococcus</taxon>
    </lineage>
</organism>
<reference key="1">
    <citation type="submission" date="2007-03" db="EMBL/GenBank/DDBJ databases">
        <title>Complete sequence of chromosome of Methanococcus maripaludis C5.</title>
        <authorList>
            <consortium name="US DOE Joint Genome Institute"/>
            <person name="Copeland A."/>
            <person name="Lucas S."/>
            <person name="Lapidus A."/>
            <person name="Barry K."/>
            <person name="Glavina del Rio T."/>
            <person name="Dalin E."/>
            <person name="Tice H."/>
            <person name="Pitluck S."/>
            <person name="Chertkov O."/>
            <person name="Brettin T."/>
            <person name="Bruce D."/>
            <person name="Han C."/>
            <person name="Detter J.C."/>
            <person name="Schmutz J."/>
            <person name="Larimer F."/>
            <person name="Land M."/>
            <person name="Hauser L."/>
            <person name="Kyrpides N."/>
            <person name="Mikhailova N."/>
            <person name="Sieprawska-Lupa M."/>
            <person name="Whitman W.B."/>
            <person name="Richardson P."/>
        </authorList>
    </citation>
    <scope>NUCLEOTIDE SEQUENCE [LARGE SCALE GENOMIC DNA]</scope>
    <source>
        <strain>C5 / ATCC BAA-1333</strain>
    </source>
</reference>
<sequence>MSEFKRLMRLKLKMKQKRPEFKRQDWFKCSRIGTSWRRPFGKHSGMRIGLTHRAAVATVGYRGPALVRGLHPSGLQDILVNNVKELVALNPEIQGARIAATVGKRKRIEIVKKANELGIRVFNVSKQKQDEFLSL</sequence>
<keyword id="KW-0687">Ribonucleoprotein</keyword>
<keyword id="KW-0689">Ribosomal protein</keyword>
<proteinExistence type="inferred from homology"/>